<feature type="chain" id="PRO_0000322721" description="LexA repressor">
    <location>
        <begin position="1"/>
        <end position="201"/>
    </location>
</feature>
<feature type="DNA-binding region" description="H-T-H motif" evidence="1">
    <location>
        <begin position="29"/>
        <end position="49"/>
    </location>
</feature>
<feature type="active site" description="For autocatalytic cleavage activity" evidence="1">
    <location>
        <position position="125"/>
    </location>
</feature>
<feature type="active site" description="For autocatalytic cleavage activity" evidence="1">
    <location>
        <position position="162"/>
    </location>
</feature>
<feature type="site" description="Cleavage; by autolysis" evidence="1">
    <location>
        <begin position="89"/>
        <end position="90"/>
    </location>
</feature>
<accession>A7FUK4</accession>
<reference key="1">
    <citation type="journal article" date="2007" name="PLoS ONE">
        <title>Analysis of the neurotoxin complex genes in Clostridium botulinum A1-A4 and B1 strains: BoNT/A3, /Ba4 and /B1 clusters are located within plasmids.</title>
        <authorList>
            <person name="Smith T.J."/>
            <person name="Hill K.K."/>
            <person name="Foley B.T."/>
            <person name="Detter J.C."/>
            <person name="Munk A.C."/>
            <person name="Bruce D.C."/>
            <person name="Doggett N.A."/>
            <person name="Smith L.A."/>
            <person name="Marks J.D."/>
            <person name="Xie G."/>
            <person name="Brettin T.S."/>
        </authorList>
    </citation>
    <scope>NUCLEOTIDE SEQUENCE [LARGE SCALE GENOMIC DNA]</scope>
    <source>
        <strain>ATCC 19397 / Type A</strain>
    </source>
</reference>
<keyword id="KW-0068">Autocatalytic cleavage</keyword>
<keyword id="KW-0227">DNA damage</keyword>
<keyword id="KW-0234">DNA repair</keyword>
<keyword id="KW-0235">DNA replication</keyword>
<keyword id="KW-0238">DNA-binding</keyword>
<keyword id="KW-0378">Hydrolase</keyword>
<keyword id="KW-0678">Repressor</keyword>
<keyword id="KW-0742">SOS response</keyword>
<keyword id="KW-0804">Transcription</keyword>
<keyword id="KW-0805">Transcription regulation</keyword>
<sequence>MNKSRIDKQNEVYNFIKLQIKEKGYPPSVREICKAVGLSSTSSVHFHLKRLEKEGLIKRDSSKTRAIEIVDPTSKKEVINVPIVGTITAGNPILAIENIEDVFPLPIDYVKNTKDLFMLKVSGESMIEAGILNGDLAIIEKTDSANNGDIVVALIDNEATLKRFFKESSYIRLQPENKSMKPIILENCKVLGRLVGIYRKY</sequence>
<comment type="function">
    <text evidence="1">Represses a number of genes involved in the response to DNA damage (SOS response), including recA and lexA. In the presence of single-stranded DNA, RecA interacts with LexA causing an autocatalytic cleavage which disrupts the DNA-binding part of LexA, leading to derepression of the SOS regulon and eventually DNA repair.</text>
</comment>
<comment type="catalytic activity">
    <reaction evidence="1">
        <text>Hydrolysis of Ala-|-Gly bond in repressor LexA.</text>
        <dbReference type="EC" id="3.4.21.88"/>
    </reaction>
</comment>
<comment type="subunit">
    <text evidence="1">Homodimer.</text>
</comment>
<comment type="similarity">
    <text evidence="1">Belongs to the peptidase S24 family.</text>
</comment>
<dbReference type="EC" id="3.4.21.88" evidence="1"/>
<dbReference type="EMBL" id="CP000726">
    <property type="protein sequence ID" value="ABS33610.1"/>
    <property type="molecule type" value="Genomic_DNA"/>
</dbReference>
<dbReference type="RefSeq" id="WP_011986377.1">
    <property type="nucleotide sequence ID" value="NC_009697.1"/>
</dbReference>
<dbReference type="SMR" id="A7FUK4"/>
<dbReference type="MEROPS" id="S24.001"/>
<dbReference type="GeneID" id="5186050"/>
<dbReference type="KEGG" id="cba:CLB_1729"/>
<dbReference type="HOGENOM" id="CLU_066192_45_1_9"/>
<dbReference type="GO" id="GO:0003677">
    <property type="term" value="F:DNA binding"/>
    <property type="evidence" value="ECO:0007669"/>
    <property type="project" value="UniProtKB-UniRule"/>
</dbReference>
<dbReference type="GO" id="GO:0004252">
    <property type="term" value="F:serine-type endopeptidase activity"/>
    <property type="evidence" value="ECO:0007669"/>
    <property type="project" value="UniProtKB-UniRule"/>
</dbReference>
<dbReference type="GO" id="GO:0006281">
    <property type="term" value="P:DNA repair"/>
    <property type="evidence" value="ECO:0007669"/>
    <property type="project" value="UniProtKB-UniRule"/>
</dbReference>
<dbReference type="GO" id="GO:0006260">
    <property type="term" value="P:DNA replication"/>
    <property type="evidence" value="ECO:0007669"/>
    <property type="project" value="UniProtKB-UniRule"/>
</dbReference>
<dbReference type="GO" id="GO:0045892">
    <property type="term" value="P:negative regulation of DNA-templated transcription"/>
    <property type="evidence" value="ECO:0007669"/>
    <property type="project" value="UniProtKB-UniRule"/>
</dbReference>
<dbReference type="GO" id="GO:0006508">
    <property type="term" value="P:proteolysis"/>
    <property type="evidence" value="ECO:0007669"/>
    <property type="project" value="InterPro"/>
</dbReference>
<dbReference type="GO" id="GO:0009432">
    <property type="term" value="P:SOS response"/>
    <property type="evidence" value="ECO:0007669"/>
    <property type="project" value="UniProtKB-UniRule"/>
</dbReference>
<dbReference type="CDD" id="cd00090">
    <property type="entry name" value="HTH_ARSR"/>
    <property type="match status" value="1"/>
</dbReference>
<dbReference type="CDD" id="cd06529">
    <property type="entry name" value="S24_LexA-like"/>
    <property type="match status" value="1"/>
</dbReference>
<dbReference type="FunFam" id="1.10.10.10:FF:000009">
    <property type="entry name" value="LexA repressor"/>
    <property type="match status" value="1"/>
</dbReference>
<dbReference type="FunFam" id="2.10.109.10:FF:000001">
    <property type="entry name" value="LexA repressor"/>
    <property type="match status" value="1"/>
</dbReference>
<dbReference type="Gene3D" id="2.10.109.10">
    <property type="entry name" value="Umud Fragment, subunit A"/>
    <property type="match status" value="1"/>
</dbReference>
<dbReference type="Gene3D" id="1.10.10.10">
    <property type="entry name" value="Winged helix-like DNA-binding domain superfamily/Winged helix DNA-binding domain"/>
    <property type="match status" value="1"/>
</dbReference>
<dbReference type="HAMAP" id="MF_00015">
    <property type="entry name" value="LexA"/>
    <property type="match status" value="1"/>
</dbReference>
<dbReference type="InterPro" id="IPR011991">
    <property type="entry name" value="ArsR-like_HTH"/>
</dbReference>
<dbReference type="InterPro" id="IPR006200">
    <property type="entry name" value="LexA"/>
</dbReference>
<dbReference type="InterPro" id="IPR039418">
    <property type="entry name" value="LexA-like"/>
</dbReference>
<dbReference type="InterPro" id="IPR036286">
    <property type="entry name" value="LexA/Signal_pep-like_sf"/>
</dbReference>
<dbReference type="InterPro" id="IPR006199">
    <property type="entry name" value="LexA_DNA-bd_dom"/>
</dbReference>
<dbReference type="InterPro" id="IPR050077">
    <property type="entry name" value="LexA_repressor"/>
</dbReference>
<dbReference type="InterPro" id="IPR006197">
    <property type="entry name" value="Peptidase_S24_LexA"/>
</dbReference>
<dbReference type="InterPro" id="IPR015927">
    <property type="entry name" value="Peptidase_S24_S26A/B/C"/>
</dbReference>
<dbReference type="InterPro" id="IPR036388">
    <property type="entry name" value="WH-like_DNA-bd_sf"/>
</dbReference>
<dbReference type="InterPro" id="IPR036390">
    <property type="entry name" value="WH_DNA-bd_sf"/>
</dbReference>
<dbReference type="NCBIfam" id="TIGR00498">
    <property type="entry name" value="lexA"/>
    <property type="match status" value="1"/>
</dbReference>
<dbReference type="PANTHER" id="PTHR33516">
    <property type="entry name" value="LEXA REPRESSOR"/>
    <property type="match status" value="1"/>
</dbReference>
<dbReference type="PANTHER" id="PTHR33516:SF2">
    <property type="entry name" value="LEXA REPRESSOR-RELATED"/>
    <property type="match status" value="1"/>
</dbReference>
<dbReference type="Pfam" id="PF01726">
    <property type="entry name" value="LexA_DNA_bind"/>
    <property type="match status" value="1"/>
</dbReference>
<dbReference type="Pfam" id="PF00717">
    <property type="entry name" value="Peptidase_S24"/>
    <property type="match status" value="1"/>
</dbReference>
<dbReference type="PRINTS" id="PR00726">
    <property type="entry name" value="LEXASERPTASE"/>
</dbReference>
<dbReference type="SUPFAM" id="SSF51306">
    <property type="entry name" value="LexA/Signal peptidase"/>
    <property type="match status" value="1"/>
</dbReference>
<dbReference type="SUPFAM" id="SSF46785">
    <property type="entry name" value="Winged helix' DNA-binding domain"/>
    <property type="match status" value="1"/>
</dbReference>
<organism>
    <name type="scientific">Clostridium botulinum (strain ATCC 19397 / Type A)</name>
    <dbReference type="NCBI Taxonomy" id="441770"/>
    <lineage>
        <taxon>Bacteria</taxon>
        <taxon>Bacillati</taxon>
        <taxon>Bacillota</taxon>
        <taxon>Clostridia</taxon>
        <taxon>Eubacteriales</taxon>
        <taxon>Clostridiaceae</taxon>
        <taxon>Clostridium</taxon>
    </lineage>
</organism>
<protein>
    <recommendedName>
        <fullName evidence="1">LexA repressor</fullName>
        <ecNumber evidence="1">3.4.21.88</ecNumber>
    </recommendedName>
</protein>
<gene>
    <name evidence="1" type="primary">lexA</name>
    <name type="ordered locus">CLB_1729</name>
</gene>
<evidence type="ECO:0000255" key="1">
    <source>
        <dbReference type="HAMAP-Rule" id="MF_00015"/>
    </source>
</evidence>
<proteinExistence type="inferred from homology"/>
<name>LEXA_CLOB1</name>